<reference key="1">
    <citation type="journal article" date="1995" name="Yeast">
        <title>Sequence analysis of a 33.1 kb fragment from the left arm of Saccharomyces cerevisiae chromosome X, including putative proteins with leucine zippers, a fungal Zn(II)2-Cys6 binuclear cluster domain and a putative alpha 2-SCB-alpha 2 binding site.</title>
        <authorList>
            <person name="Miosga T."/>
            <person name="Schaaff-Gerstenschlaeger I."/>
            <person name="Chalwatzis N."/>
            <person name="Baur A."/>
            <person name="Boles E."/>
            <person name="Fournier C."/>
            <person name="Schmitt S."/>
            <person name="Velten C."/>
            <person name="Wilhelm N."/>
            <person name="Zimmermann F.K."/>
        </authorList>
    </citation>
    <scope>NUCLEOTIDE SEQUENCE [GENOMIC DNA]</scope>
    <source>
        <strain>ATCC 204508 / S288c</strain>
    </source>
</reference>
<reference key="2">
    <citation type="journal article" date="1996" name="EMBO J.">
        <title>Complete nucleotide sequence of Saccharomyces cerevisiae chromosome X.</title>
        <authorList>
            <person name="Galibert F."/>
            <person name="Alexandraki D."/>
            <person name="Baur A."/>
            <person name="Boles E."/>
            <person name="Chalwatzis N."/>
            <person name="Chuat J.-C."/>
            <person name="Coster F."/>
            <person name="Cziepluch C."/>
            <person name="de Haan M."/>
            <person name="Domdey H."/>
            <person name="Durand P."/>
            <person name="Entian K.-D."/>
            <person name="Gatius M."/>
            <person name="Goffeau A."/>
            <person name="Grivell L.A."/>
            <person name="Hennemann A."/>
            <person name="Herbert C.J."/>
            <person name="Heumann K."/>
            <person name="Hilger F."/>
            <person name="Hollenberg C.P."/>
            <person name="Huang M.-E."/>
            <person name="Jacq C."/>
            <person name="Jauniaux J.-C."/>
            <person name="Katsoulou C."/>
            <person name="Kirchrath L."/>
            <person name="Kleine K."/>
            <person name="Kordes E."/>
            <person name="Koetter P."/>
            <person name="Liebl S."/>
            <person name="Louis E.J."/>
            <person name="Manus V."/>
            <person name="Mewes H.-W."/>
            <person name="Miosga T."/>
            <person name="Obermaier B."/>
            <person name="Perea J."/>
            <person name="Pohl T.M."/>
            <person name="Portetelle D."/>
            <person name="Pujol A."/>
            <person name="Purnelle B."/>
            <person name="Ramezani Rad M."/>
            <person name="Rasmussen S.W."/>
            <person name="Rose M."/>
            <person name="Rossau R."/>
            <person name="Schaaff-Gerstenschlaeger I."/>
            <person name="Smits P.H.M."/>
            <person name="Scarcez T."/>
            <person name="Soriano N."/>
            <person name="To Van D."/>
            <person name="Tzermia M."/>
            <person name="Van Broekhoven A."/>
            <person name="Vandenbol M."/>
            <person name="Wedler H."/>
            <person name="von Wettstein D."/>
            <person name="Wambutt R."/>
            <person name="Zagulski M."/>
            <person name="Zollner A."/>
            <person name="Karpfinger-Hartl L."/>
        </authorList>
    </citation>
    <scope>NUCLEOTIDE SEQUENCE [LARGE SCALE GENOMIC DNA]</scope>
    <source>
        <strain>ATCC 204508 / S288c</strain>
    </source>
</reference>
<reference key="3">
    <citation type="journal article" date="2014" name="G3 (Bethesda)">
        <title>The reference genome sequence of Saccharomyces cerevisiae: Then and now.</title>
        <authorList>
            <person name="Engel S.R."/>
            <person name="Dietrich F.S."/>
            <person name="Fisk D.G."/>
            <person name="Binkley G."/>
            <person name="Balakrishnan R."/>
            <person name="Costanzo M.C."/>
            <person name="Dwight S.S."/>
            <person name="Hitz B.C."/>
            <person name="Karra K."/>
            <person name="Nash R.S."/>
            <person name="Weng S."/>
            <person name="Wong E.D."/>
            <person name="Lloyd P."/>
            <person name="Skrzypek M.S."/>
            <person name="Miyasato S.R."/>
            <person name="Simison M."/>
            <person name="Cherry J.M."/>
        </authorList>
    </citation>
    <scope>GENOME REANNOTATION</scope>
    <source>
        <strain>ATCC 204508 / S288c</strain>
    </source>
</reference>
<reference key="4">
    <citation type="journal article" date="2007" name="Genome Res.">
        <title>Approaching a complete repository of sequence-verified protein-encoding clones for Saccharomyces cerevisiae.</title>
        <authorList>
            <person name="Hu Y."/>
            <person name="Rolfs A."/>
            <person name="Bhullar B."/>
            <person name="Murthy T.V.S."/>
            <person name="Zhu C."/>
            <person name="Berger M.F."/>
            <person name="Camargo A.A."/>
            <person name="Kelley F."/>
            <person name="McCarron S."/>
            <person name="Jepson D."/>
            <person name="Richardson A."/>
            <person name="Raphael J."/>
            <person name="Moreira D."/>
            <person name="Taycher E."/>
            <person name="Zuo D."/>
            <person name="Mohr S."/>
            <person name="Kane M.F."/>
            <person name="Williamson J."/>
            <person name="Simpson A.J.G."/>
            <person name="Bulyk M.L."/>
            <person name="Harlow E."/>
            <person name="Marsischky G."/>
            <person name="Kolodner R.D."/>
            <person name="LaBaer J."/>
        </authorList>
    </citation>
    <scope>NUCLEOTIDE SEQUENCE [GENOMIC DNA]</scope>
    <source>
        <strain>ATCC 204508 / S288c</strain>
    </source>
</reference>
<reference key="5">
    <citation type="journal article" date="2002" name="Curr. Genet.">
        <title>Sequence-based approach for identification of cell wall proteins in Saccharomyces cerevisiae.</title>
        <authorList>
            <person name="Terashima H."/>
            <person name="Fukuchi S."/>
            <person name="Nakai K."/>
            <person name="Arisawa M."/>
            <person name="Hamada K."/>
            <person name="Yabuki N."/>
            <person name="Kitada K."/>
        </authorList>
    </citation>
    <scope>SUBCELLULAR LOCATION</scope>
</reference>
<reference key="6">
    <citation type="journal article" date="2003" name="Nature">
        <title>Global analysis of protein expression in yeast.</title>
        <authorList>
            <person name="Ghaemmaghami S."/>
            <person name="Huh W.-K."/>
            <person name="Bower K."/>
            <person name="Howson R.W."/>
            <person name="Belle A."/>
            <person name="Dephoure N."/>
            <person name="O'Shea E.K."/>
            <person name="Weissman J.S."/>
        </authorList>
    </citation>
    <scope>LEVEL OF PROTEIN EXPRESSION [LARGE SCALE ANALYSIS]</scope>
</reference>
<reference key="7">
    <citation type="journal article" date="2012" name="Proc. Natl. Acad. Sci. U.S.A.">
        <title>Pathogen-Related Yeast (PRY) proteins and members of the CAP superfamily are secreted sterol-binding proteins.</title>
        <authorList>
            <person name="Choudhary V."/>
            <person name="Schneiter R."/>
        </authorList>
    </citation>
    <scope>IDENTIFICATION BY MASS SPECTROMETRY</scope>
    <scope>FUNCTION</scope>
    <scope>STEROL-BINDING</scope>
    <scope>SUBCELLULAR LOCATION</scope>
    <scope>GLYCOSYLATION</scope>
</reference>
<proteinExistence type="evidence at protein level"/>
<accession>P47032</accession>
<accession>D6VWA4</accession>
<evidence type="ECO:0000255" key="1"/>
<evidence type="ECO:0000256" key="2">
    <source>
        <dbReference type="SAM" id="MobiDB-lite"/>
    </source>
</evidence>
<evidence type="ECO:0000269" key="3">
    <source>
    </source>
</evidence>
<evidence type="ECO:0000269" key="4">
    <source>
    </source>
</evidence>
<evidence type="ECO:0000269" key="5">
    <source>
    </source>
</evidence>
<evidence type="ECO:0000303" key="6">
    <source>
    </source>
</evidence>
<evidence type="ECO:0000305" key="7"/>
<evidence type="ECO:0007829" key="8">
    <source>
        <dbReference type="PDB" id="5JYS"/>
    </source>
</evidence>
<protein>
    <recommendedName>
        <fullName evidence="7">Protein PRY1</fullName>
    </recommendedName>
    <alternativeName>
        <fullName evidence="6">Pathogenesis-related protein 1</fullName>
    </alternativeName>
</protein>
<organism>
    <name type="scientific">Saccharomyces cerevisiae (strain ATCC 204508 / S288c)</name>
    <name type="common">Baker's yeast</name>
    <dbReference type="NCBI Taxonomy" id="559292"/>
    <lineage>
        <taxon>Eukaryota</taxon>
        <taxon>Fungi</taxon>
        <taxon>Dikarya</taxon>
        <taxon>Ascomycota</taxon>
        <taxon>Saccharomycotina</taxon>
        <taxon>Saccharomycetes</taxon>
        <taxon>Saccharomycetales</taxon>
        <taxon>Saccharomycetaceae</taxon>
        <taxon>Saccharomyces</taxon>
    </lineage>
</organism>
<sequence length="299" mass="30634">MKLSKLSILTSALATSALAAPAVVTVTEHAHEAAVVTVQGVVYVENGQTRTTYETLAPASTATPTSTATALVAPPVAPSSASSNSDVVLSALKNLASVWGKTTDSTTTLTSSESTSQSLAQATTTSTPAAASTTSTPAATTTTSQAAATSSASSSDSDLSDFASSVLAEHNKKRALHKDTPALSWSDTLASYAQDYADNYDCSGTLTHSGGPYGENLALGYDGPAAVDAWYNEISNYDFSNPGFSSNTGHFTQVVWKSTTQVGCGIKTCGGAWGDYVICSYDPAGNYEGEYADNVEPLA</sequence>
<comment type="function">
    <text evidence="5">Secreted protein required for efficient export of lipids such as acetylated sterols. Acts in detoxification of hydrophobic compounds.</text>
</comment>
<comment type="subcellular location">
    <subcellularLocation>
        <location evidence="3 5">Secreted</location>
    </subcellularLocation>
</comment>
<comment type="domain">
    <text evidence="5">The SCP domain is necessary and sufficient for lipid export and sterol-binding.</text>
</comment>
<comment type="PTM">
    <text evidence="5">O-glycosylated.</text>
</comment>
<comment type="miscellaneous">
    <text evidence="4">Present with 556 molecules/cell in log phase SD medium.</text>
</comment>
<comment type="similarity">
    <text evidence="7">Belongs to the CRISP family.</text>
</comment>
<dbReference type="EMBL" id="Z49354">
    <property type="protein sequence ID" value="CAA89372.1"/>
    <property type="molecule type" value="Genomic_DNA"/>
</dbReference>
<dbReference type="EMBL" id="X83502">
    <property type="protein sequence ID" value="CAA58491.1"/>
    <property type="molecule type" value="Genomic_DNA"/>
</dbReference>
<dbReference type="EMBL" id="X88851">
    <property type="protein sequence ID" value="CAA61315.1"/>
    <property type="molecule type" value="Genomic_DNA"/>
</dbReference>
<dbReference type="EMBL" id="AY558306">
    <property type="protein sequence ID" value="AAS56632.1"/>
    <property type="molecule type" value="Genomic_DNA"/>
</dbReference>
<dbReference type="EMBL" id="BK006943">
    <property type="protein sequence ID" value="DAA08720.1"/>
    <property type="molecule type" value="Genomic_DNA"/>
</dbReference>
<dbReference type="PIR" id="S56031">
    <property type="entry name" value="S56031"/>
</dbReference>
<dbReference type="RefSeq" id="NP_012456.1">
    <property type="nucleotide sequence ID" value="NM_001181512.1"/>
</dbReference>
<dbReference type="PDB" id="5JYS">
    <property type="method" value="X-ray"/>
    <property type="resolution" value="1.90 A"/>
    <property type="chains" value="A=2-299"/>
</dbReference>
<dbReference type="PDBsum" id="5JYS"/>
<dbReference type="SMR" id="P47032"/>
<dbReference type="BioGRID" id="33677">
    <property type="interactions" value="122"/>
</dbReference>
<dbReference type="DIP" id="DIP-3857N"/>
<dbReference type="FunCoup" id="P47032">
    <property type="interactions" value="97"/>
</dbReference>
<dbReference type="IntAct" id="P47032">
    <property type="interactions" value="2"/>
</dbReference>
<dbReference type="MINT" id="P47032"/>
<dbReference type="STRING" id="4932.YJL079C"/>
<dbReference type="PaxDb" id="4932-YJL079C"/>
<dbReference type="PeptideAtlas" id="P47032"/>
<dbReference type="EnsemblFungi" id="YJL079C_mRNA">
    <property type="protein sequence ID" value="YJL079C"/>
    <property type="gene ID" value="YJL079C"/>
</dbReference>
<dbReference type="GeneID" id="853366"/>
<dbReference type="KEGG" id="sce:YJL079C"/>
<dbReference type="AGR" id="SGD:S000003615"/>
<dbReference type="SGD" id="S000003615">
    <property type="gene designation" value="PRY1"/>
</dbReference>
<dbReference type="VEuPathDB" id="FungiDB:YJL079C"/>
<dbReference type="eggNOG" id="KOG3017">
    <property type="taxonomic scope" value="Eukaryota"/>
</dbReference>
<dbReference type="GeneTree" id="ENSGT00980000198854"/>
<dbReference type="HOGENOM" id="CLU_035730_3_0_1"/>
<dbReference type="InParanoid" id="P47032"/>
<dbReference type="OMA" id="DSMRVGC"/>
<dbReference type="OrthoDB" id="337038at2759"/>
<dbReference type="BioCyc" id="YEAST:G3O-31536-MONOMER"/>
<dbReference type="BioGRID-ORCS" id="853366">
    <property type="hits" value="9 hits in 10 CRISPR screens"/>
</dbReference>
<dbReference type="PRO" id="PR:P47032"/>
<dbReference type="Proteomes" id="UP000002311">
    <property type="component" value="Chromosome X"/>
</dbReference>
<dbReference type="RNAct" id="P47032">
    <property type="molecule type" value="protein"/>
</dbReference>
<dbReference type="GO" id="GO:0005783">
    <property type="term" value="C:endoplasmic reticulum"/>
    <property type="evidence" value="ECO:0007005"/>
    <property type="project" value="SGD"/>
</dbReference>
<dbReference type="GO" id="GO:0005576">
    <property type="term" value="C:extracellular region"/>
    <property type="evidence" value="ECO:0000314"/>
    <property type="project" value="SGD"/>
</dbReference>
<dbReference type="GO" id="GO:0005615">
    <property type="term" value="C:extracellular space"/>
    <property type="evidence" value="ECO:0000318"/>
    <property type="project" value="GO_Central"/>
</dbReference>
<dbReference type="GO" id="GO:0000324">
    <property type="term" value="C:fungal-type vacuole"/>
    <property type="evidence" value="ECO:0007005"/>
    <property type="project" value="SGD"/>
</dbReference>
<dbReference type="GO" id="GO:0005635">
    <property type="term" value="C:nuclear envelope"/>
    <property type="evidence" value="ECO:0007005"/>
    <property type="project" value="SGD"/>
</dbReference>
<dbReference type="GO" id="GO:0015485">
    <property type="term" value="F:cholesterol binding"/>
    <property type="evidence" value="ECO:0000314"/>
    <property type="project" value="SGD"/>
</dbReference>
<dbReference type="GO" id="GO:0005504">
    <property type="term" value="F:fatty acid binding"/>
    <property type="evidence" value="ECO:0000314"/>
    <property type="project" value="SGD"/>
</dbReference>
<dbReference type="GO" id="GO:0000287">
    <property type="term" value="F:magnesium ion binding"/>
    <property type="evidence" value="ECO:0000314"/>
    <property type="project" value="SGD"/>
</dbReference>
<dbReference type="GO" id="GO:0032934">
    <property type="term" value="F:sterol binding"/>
    <property type="evidence" value="ECO:0000314"/>
    <property type="project" value="SGD"/>
</dbReference>
<dbReference type="GO" id="GO:0015908">
    <property type="term" value="P:fatty acid transport"/>
    <property type="evidence" value="ECO:0000316"/>
    <property type="project" value="SGD"/>
</dbReference>
<dbReference type="GO" id="GO:0019953">
    <property type="term" value="P:sexual reproduction"/>
    <property type="evidence" value="ECO:0000318"/>
    <property type="project" value="GO_Central"/>
</dbReference>
<dbReference type="GO" id="GO:0015918">
    <property type="term" value="P:sterol transport"/>
    <property type="evidence" value="ECO:0000315"/>
    <property type="project" value="SGD"/>
</dbReference>
<dbReference type="CDD" id="cd05384">
    <property type="entry name" value="CAP_PRY1-like"/>
    <property type="match status" value="1"/>
</dbReference>
<dbReference type="FunFam" id="3.40.33.10:FF:000012">
    <property type="entry name" value="Secreted protein PRY1"/>
    <property type="match status" value="1"/>
</dbReference>
<dbReference type="Gene3D" id="3.40.33.10">
    <property type="entry name" value="CAP"/>
    <property type="match status" value="1"/>
</dbReference>
<dbReference type="InterPro" id="IPR018244">
    <property type="entry name" value="Allrgn_V5/Tpx1_CS"/>
</dbReference>
<dbReference type="InterPro" id="IPR014044">
    <property type="entry name" value="CAP_dom"/>
</dbReference>
<dbReference type="InterPro" id="IPR035940">
    <property type="entry name" value="CAP_sf"/>
</dbReference>
<dbReference type="InterPro" id="IPR001283">
    <property type="entry name" value="CRISP-related"/>
</dbReference>
<dbReference type="PANTHER" id="PTHR10334">
    <property type="entry name" value="CYSTEINE-RICH SECRETORY PROTEIN-RELATED"/>
    <property type="match status" value="1"/>
</dbReference>
<dbReference type="Pfam" id="PF00188">
    <property type="entry name" value="CAP"/>
    <property type="match status" value="1"/>
</dbReference>
<dbReference type="PRINTS" id="PR00837">
    <property type="entry name" value="V5TPXLIKE"/>
</dbReference>
<dbReference type="SMART" id="SM00198">
    <property type="entry name" value="SCP"/>
    <property type="match status" value="1"/>
</dbReference>
<dbReference type="SUPFAM" id="SSF55797">
    <property type="entry name" value="PR-1-like"/>
    <property type="match status" value="1"/>
</dbReference>
<dbReference type="PROSITE" id="PS01009">
    <property type="entry name" value="CRISP_1"/>
    <property type="match status" value="1"/>
</dbReference>
<dbReference type="PROSITE" id="PS01010">
    <property type="entry name" value="CRISP_2"/>
    <property type="match status" value="1"/>
</dbReference>
<feature type="signal peptide" evidence="1">
    <location>
        <begin position="1"/>
        <end position="19"/>
    </location>
</feature>
<feature type="chain" id="PRO_0000006317" description="Protein PRY1">
    <location>
        <begin position="20"/>
        <end position="299"/>
    </location>
</feature>
<feature type="domain" description="SCP">
    <location>
        <begin position="167"/>
        <end position="281"/>
    </location>
</feature>
<feature type="region of interest" description="Disordered" evidence="2">
    <location>
        <begin position="103"/>
        <end position="157"/>
    </location>
</feature>
<feature type="helix" evidence="8">
    <location>
        <begin position="161"/>
        <end position="174"/>
    </location>
</feature>
<feature type="helix" evidence="8">
    <location>
        <begin position="187"/>
        <end position="198"/>
    </location>
</feature>
<feature type="strand" evidence="8">
    <location>
        <begin position="212"/>
        <end position="221"/>
    </location>
</feature>
<feature type="helix" evidence="8">
    <location>
        <begin position="223"/>
        <end position="231"/>
    </location>
</feature>
<feature type="helix" evidence="8">
    <location>
        <begin position="232"/>
        <end position="236"/>
    </location>
</feature>
<feature type="turn" evidence="8">
    <location>
        <begin position="246"/>
        <end position="248"/>
    </location>
</feature>
<feature type="helix" evidence="8">
    <location>
        <begin position="249"/>
        <end position="254"/>
    </location>
</feature>
<feature type="strand" evidence="8">
    <location>
        <begin position="261"/>
        <end position="268"/>
    </location>
</feature>
<feature type="turn" evidence="8">
    <location>
        <begin position="271"/>
        <end position="273"/>
    </location>
</feature>
<feature type="strand" evidence="8">
    <location>
        <begin position="275"/>
        <end position="283"/>
    </location>
</feature>
<feature type="helix" evidence="8">
    <location>
        <begin position="291"/>
        <end position="294"/>
    </location>
</feature>
<name>PRY1_YEAST</name>
<keyword id="KW-0002">3D-structure</keyword>
<keyword id="KW-0325">Glycoprotein</keyword>
<keyword id="KW-0445">Lipid transport</keyword>
<keyword id="KW-0446">Lipid-binding</keyword>
<keyword id="KW-1185">Reference proteome</keyword>
<keyword id="KW-0964">Secreted</keyword>
<keyword id="KW-0732">Signal</keyword>
<keyword id="KW-0813">Transport</keyword>
<gene>
    <name evidence="6" type="primary">PRY1</name>
    <name type="ordered locus">YJL079C</name>
    <name type="ORF">J1022</name>
</gene>